<keyword id="KW-0694">RNA-binding</keyword>
<keyword id="KW-0804">Transcription</keyword>
<keyword id="KW-0889">Transcription antitermination</keyword>
<keyword id="KW-0805">Transcription regulation</keyword>
<feature type="chain" id="PRO_1000192459" description="Transcription antitermination protein NusB">
    <location>
        <begin position="1"/>
        <end position="140"/>
    </location>
</feature>
<accession>C1C5G8</accession>
<proteinExistence type="inferred from homology"/>
<evidence type="ECO:0000255" key="1">
    <source>
        <dbReference type="HAMAP-Rule" id="MF_00073"/>
    </source>
</evidence>
<name>NUSB_STRP7</name>
<organism>
    <name type="scientific">Streptococcus pneumoniae (strain 70585)</name>
    <dbReference type="NCBI Taxonomy" id="488221"/>
    <lineage>
        <taxon>Bacteria</taxon>
        <taxon>Bacillati</taxon>
        <taxon>Bacillota</taxon>
        <taxon>Bacilli</taxon>
        <taxon>Lactobacillales</taxon>
        <taxon>Streptococcaceae</taxon>
        <taxon>Streptococcus</taxon>
    </lineage>
</organism>
<reference key="1">
    <citation type="journal article" date="2010" name="Genome Biol.">
        <title>Structure and dynamics of the pan-genome of Streptococcus pneumoniae and closely related species.</title>
        <authorList>
            <person name="Donati C."/>
            <person name="Hiller N.L."/>
            <person name="Tettelin H."/>
            <person name="Muzzi A."/>
            <person name="Croucher N.J."/>
            <person name="Angiuoli S.V."/>
            <person name="Oggioni M."/>
            <person name="Dunning Hotopp J.C."/>
            <person name="Hu F.Z."/>
            <person name="Riley D.R."/>
            <person name="Covacci A."/>
            <person name="Mitchell T.J."/>
            <person name="Bentley S.D."/>
            <person name="Kilian M."/>
            <person name="Ehrlich G.D."/>
            <person name="Rappuoli R."/>
            <person name="Moxon E.R."/>
            <person name="Masignani V."/>
        </authorList>
    </citation>
    <scope>NUCLEOTIDE SEQUENCE [LARGE SCALE GENOMIC DNA]</scope>
    <source>
        <strain>70585</strain>
    </source>
</reference>
<sequence>MTSPLLESRRQLRKCAFQALMSLEFGTNVETACRFAYTHDREDTDVQLPAFLIDLVSGVQAKKEELDKQITQHLKVGWTIERLTLVERNLLRLGVFEITSFDTPQLVAVNEAIELAKDFSDQKSARFINGLLSQFVTEEQ</sequence>
<gene>
    <name evidence="1" type="primary">nusB</name>
    <name type="ordered locus">SP70585_0502</name>
</gene>
<comment type="function">
    <text evidence="1">Involved in transcription antitermination. Required for transcription of ribosomal RNA (rRNA) genes. Binds specifically to the boxA antiterminator sequence of the ribosomal RNA (rrn) operons.</text>
</comment>
<comment type="similarity">
    <text evidence="1">Belongs to the NusB family.</text>
</comment>
<dbReference type="EMBL" id="CP000918">
    <property type="protein sequence ID" value="ACO17049.1"/>
    <property type="molecule type" value="Genomic_DNA"/>
</dbReference>
<dbReference type="RefSeq" id="WP_000203665.1">
    <property type="nucleotide sequence ID" value="NC_012468.1"/>
</dbReference>
<dbReference type="SMR" id="C1C5G8"/>
<dbReference type="KEGG" id="snm:SP70585_0502"/>
<dbReference type="HOGENOM" id="CLU_087843_3_2_9"/>
<dbReference type="Proteomes" id="UP000002211">
    <property type="component" value="Chromosome"/>
</dbReference>
<dbReference type="GO" id="GO:0005829">
    <property type="term" value="C:cytosol"/>
    <property type="evidence" value="ECO:0007669"/>
    <property type="project" value="TreeGrafter"/>
</dbReference>
<dbReference type="GO" id="GO:0003723">
    <property type="term" value="F:RNA binding"/>
    <property type="evidence" value="ECO:0007669"/>
    <property type="project" value="UniProtKB-UniRule"/>
</dbReference>
<dbReference type="GO" id="GO:0006353">
    <property type="term" value="P:DNA-templated transcription termination"/>
    <property type="evidence" value="ECO:0007669"/>
    <property type="project" value="UniProtKB-UniRule"/>
</dbReference>
<dbReference type="GO" id="GO:0031564">
    <property type="term" value="P:transcription antitermination"/>
    <property type="evidence" value="ECO:0007669"/>
    <property type="project" value="UniProtKB-KW"/>
</dbReference>
<dbReference type="FunFam" id="1.10.940.10:FF:000008">
    <property type="entry name" value="Transcription antitermination protein NusB"/>
    <property type="match status" value="1"/>
</dbReference>
<dbReference type="Gene3D" id="1.10.940.10">
    <property type="entry name" value="NusB-like"/>
    <property type="match status" value="1"/>
</dbReference>
<dbReference type="HAMAP" id="MF_00073">
    <property type="entry name" value="NusB"/>
    <property type="match status" value="1"/>
</dbReference>
<dbReference type="InterPro" id="IPR035926">
    <property type="entry name" value="NusB-like_sf"/>
</dbReference>
<dbReference type="InterPro" id="IPR011605">
    <property type="entry name" value="NusB_fam"/>
</dbReference>
<dbReference type="InterPro" id="IPR006027">
    <property type="entry name" value="NusB_RsmB_TIM44"/>
</dbReference>
<dbReference type="NCBIfam" id="TIGR01951">
    <property type="entry name" value="nusB"/>
    <property type="match status" value="1"/>
</dbReference>
<dbReference type="NCBIfam" id="NF001223">
    <property type="entry name" value="PRK00202.1-1"/>
    <property type="match status" value="1"/>
</dbReference>
<dbReference type="PANTHER" id="PTHR11078:SF3">
    <property type="entry name" value="ANTITERMINATION NUSB DOMAIN-CONTAINING PROTEIN"/>
    <property type="match status" value="1"/>
</dbReference>
<dbReference type="PANTHER" id="PTHR11078">
    <property type="entry name" value="N UTILIZATION SUBSTANCE PROTEIN B-RELATED"/>
    <property type="match status" value="1"/>
</dbReference>
<dbReference type="Pfam" id="PF01029">
    <property type="entry name" value="NusB"/>
    <property type="match status" value="1"/>
</dbReference>
<dbReference type="SUPFAM" id="SSF48013">
    <property type="entry name" value="NusB-like"/>
    <property type="match status" value="1"/>
</dbReference>
<protein>
    <recommendedName>
        <fullName evidence="1">Transcription antitermination protein NusB</fullName>
    </recommendedName>
    <alternativeName>
        <fullName evidence="1">Antitermination factor NusB</fullName>
    </alternativeName>
</protein>